<dbReference type="EMBL" id="CP000462">
    <property type="protein sequence ID" value="ABK36529.1"/>
    <property type="molecule type" value="Genomic_DNA"/>
</dbReference>
<dbReference type="RefSeq" id="WP_011707704.1">
    <property type="nucleotide sequence ID" value="NC_008570.1"/>
</dbReference>
<dbReference type="RefSeq" id="YP_858459.1">
    <property type="nucleotide sequence ID" value="NC_008570.1"/>
</dbReference>
<dbReference type="SMR" id="A0KQA8"/>
<dbReference type="STRING" id="380703.AHA_4031"/>
<dbReference type="EnsemblBacteria" id="ABK36529">
    <property type="protein sequence ID" value="ABK36529"/>
    <property type="gene ID" value="AHA_4031"/>
</dbReference>
<dbReference type="GeneID" id="4488030"/>
<dbReference type="KEGG" id="aha:AHA_4031"/>
<dbReference type="PATRIC" id="fig|380703.7.peg.3991"/>
<dbReference type="eggNOG" id="COG0081">
    <property type="taxonomic scope" value="Bacteria"/>
</dbReference>
<dbReference type="HOGENOM" id="CLU_062853_0_0_6"/>
<dbReference type="OrthoDB" id="9803740at2"/>
<dbReference type="Proteomes" id="UP000000756">
    <property type="component" value="Chromosome"/>
</dbReference>
<dbReference type="GO" id="GO:0022625">
    <property type="term" value="C:cytosolic large ribosomal subunit"/>
    <property type="evidence" value="ECO:0007669"/>
    <property type="project" value="TreeGrafter"/>
</dbReference>
<dbReference type="GO" id="GO:0019843">
    <property type="term" value="F:rRNA binding"/>
    <property type="evidence" value="ECO:0007669"/>
    <property type="project" value="UniProtKB-UniRule"/>
</dbReference>
<dbReference type="GO" id="GO:0003735">
    <property type="term" value="F:structural constituent of ribosome"/>
    <property type="evidence" value="ECO:0007669"/>
    <property type="project" value="InterPro"/>
</dbReference>
<dbReference type="GO" id="GO:0000049">
    <property type="term" value="F:tRNA binding"/>
    <property type="evidence" value="ECO:0007669"/>
    <property type="project" value="UniProtKB-KW"/>
</dbReference>
<dbReference type="GO" id="GO:0006417">
    <property type="term" value="P:regulation of translation"/>
    <property type="evidence" value="ECO:0007669"/>
    <property type="project" value="UniProtKB-KW"/>
</dbReference>
<dbReference type="GO" id="GO:0006412">
    <property type="term" value="P:translation"/>
    <property type="evidence" value="ECO:0007669"/>
    <property type="project" value="UniProtKB-UniRule"/>
</dbReference>
<dbReference type="CDD" id="cd00403">
    <property type="entry name" value="Ribosomal_L1"/>
    <property type="match status" value="1"/>
</dbReference>
<dbReference type="FunFam" id="3.40.50.790:FF:000001">
    <property type="entry name" value="50S ribosomal protein L1"/>
    <property type="match status" value="1"/>
</dbReference>
<dbReference type="Gene3D" id="3.30.190.20">
    <property type="match status" value="1"/>
</dbReference>
<dbReference type="Gene3D" id="3.40.50.790">
    <property type="match status" value="1"/>
</dbReference>
<dbReference type="HAMAP" id="MF_01318_B">
    <property type="entry name" value="Ribosomal_uL1_B"/>
    <property type="match status" value="1"/>
</dbReference>
<dbReference type="InterPro" id="IPR005878">
    <property type="entry name" value="Ribosom_uL1_bac-type"/>
</dbReference>
<dbReference type="InterPro" id="IPR002143">
    <property type="entry name" value="Ribosomal_uL1"/>
</dbReference>
<dbReference type="InterPro" id="IPR023674">
    <property type="entry name" value="Ribosomal_uL1-like"/>
</dbReference>
<dbReference type="InterPro" id="IPR028364">
    <property type="entry name" value="Ribosomal_uL1/biogenesis"/>
</dbReference>
<dbReference type="InterPro" id="IPR016095">
    <property type="entry name" value="Ribosomal_uL1_3-a/b-sand"/>
</dbReference>
<dbReference type="InterPro" id="IPR023673">
    <property type="entry name" value="Ribosomal_uL1_CS"/>
</dbReference>
<dbReference type="NCBIfam" id="TIGR01169">
    <property type="entry name" value="rplA_bact"/>
    <property type="match status" value="1"/>
</dbReference>
<dbReference type="PANTHER" id="PTHR36427">
    <property type="entry name" value="54S RIBOSOMAL PROTEIN L1, MITOCHONDRIAL"/>
    <property type="match status" value="1"/>
</dbReference>
<dbReference type="PANTHER" id="PTHR36427:SF3">
    <property type="entry name" value="LARGE RIBOSOMAL SUBUNIT PROTEIN UL1M"/>
    <property type="match status" value="1"/>
</dbReference>
<dbReference type="Pfam" id="PF00687">
    <property type="entry name" value="Ribosomal_L1"/>
    <property type="match status" value="1"/>
</dbReference>
<dbReference type="PIRSF" id="PIRSF002155">
    <property type="entry name" value="Ribosomal_L1"/>
    <property type="match status" value="1"/>
</dbReference>
<dbReference type="SUPFAM" id="SSF56808">
    <property type="entry name" value="Ribosomal protein L1"/>
    <property type="match status" value="1"/>
</dbReference>
<dbReference type="PROSITE" id="PS01199">
    <property type="entry name" value="RIBOSOMAL_L1"/>
    <property type="match status" value="1"/>
</dbReference>
<accession>A0KQA8</accession>
<protein>
    <recommendedName>
        <fullName evidence="1">Large ribosomal subunit protein uL1</fullName>
    </recommendedName>
    <alternativeName>
        <fullName evidence="2">50S ribosomal protein L1</fullName>
    </alternativeName>
</protein>
<reference key="1">
    <citation type="journal article" date="2006" name="J. Bacteriol.">
        <title>Genome sequence of Aeromonas hydrophila ATCC 7966T: jack of all trades.</title>
        <authorList>
            <person name="Seshadri R."/>
            <person name="Joseph S.W."/>
            <person name="Chopra A.K."/>
            <person name="Sha J."/>
            <person name="Shaw J."/>
            <person name="Graf J."/>
            <person name="Haft D.H."/>
            <person name="Wu M."/>
            <person name="Ren Q."/>
            <person name="Rosovitz M.J."/>
            <person name="Madupu R."/>
            <person name="Tallon L."/>
            <person name="Kim M."/>
            <person name="Jin S."/>
            <person name="Vuong H."/>
            <person name="Stine O.C."/>
            <person name="Ali A."/>
            <person name="Horneman A.J."/>
            <person name="Heidelberg J.F."/>
        </authorList>
    </citation>
    <scope>NUCLEOTIDE SEQUENCE [LARGE SCALE GENOMIC DNA]</scope>
    <source>
        <strain>ATCC 7966 / DSM 30187 / BCRC 13018 / CCUG 14551 / JCM 1027 / KCTC 2358 / NCIMB 9240 / NCTC 8049</strain>
    </source>
</reference>
<evidence type="ECO:0000255" key="1">
    <source>
        <dbReference type="HAMAP-Rule" id="MF_01318"/>
    </source>
</evidence>
<evidence type="ECO:0000305" key="2"/>
<keyword id="KW-1185">Reference proteome</keyword>
<keyword id="KW-0678">Repressor</keyword>
<keyword id="KW-0687">Ribonucleoprotein</keyword>
<keyword id="KW-0689">Ribosomal protein</keyword>
<keyword id="KW-0694">RNA-binding</keyword>
<keyword id="KW-0699">rRNA-binding</keyword>
<keyword id="KW-0810">Translation regulation</keyword>
<keyword id="KW-0820">tRNA-binding</keyword>
<proteinExistence type="inferred from homology"/>
<gene>
    <name evidence="1" type="primary">rplA</name>
    <name type="ordered locus">AHA_4031</name>
</gene>
<sequence length="233" mass="24601">MAKLSKRMRVIREKVDGTKEYSINEAIALLKELATAKFVESVDVAVNLGIDARKSDQNVRGATVLPHGTGREVRVAVFTQGANAEAAKAAGAELVGMDDLADLVKKGEMNFDVVIASPDAMRVVGQLGQILGPRGLMPNPKVGTVTPNVAEAVKNAKAGQVRYRNDKNGIIHTTLGKVSFNEVQLKENLEALLVALKKAKPSSAKGVFIKKVSISTTMGAGVAVDQASLEAQA</sequence>
<feature type="chain" id="PRO_0000307953" description="Large ribosomal subunit protein uL1">
    <location>
        <begin position="1"/>
        <end position="233"/>
    </location>
</feature>
<organism>
    <name type="scientific">Aeromonas hydrophila subsp. hydrophila (strain ATCC 7966 / DSM 30187 / BCRC 13018 / CCUG 14551 / JCM 1027 / KCTC 2358 / NCIMB 9240 / NCTC 8049)</name>
    <dbReference type="NCBI Taxonomy" id="380703"/>
    <lineage>
        <taxon>Bacteria</taxon>
        <taxon>Pseudomonadati</taxon>
        <taxon>Pseudomonadota</taxon>
        <taxon>Gammaproteobacteria</taxon>
        <taxon>Aeromonadales</taxon>
        <taxon>Aeromonadaceae</taxon>
        <taxon>Aeromonas</taxon>
    </lineage>
</organism>
<comment type="function">
    <text evidence="1">Binds directly to 23S rRNA. The L1 stalk is quite mobile in the ribosome, and is involved in E site tRNA release.</text>
</comment>
<comment type="function">
    <text evidence="1">Protein L1 is also a translational repressor protein, it controls the translation of the L11 operon by binding to its mRNA.</text>
</comment>
<comment type="subunit">
    <text evidence="1">Part of the 50S ribosomal subunit.</text>
</comment>
<comment type="similarity">
    <text evidence="1">Belongs to the universal ribosomal protein uL1 family.</text>
</comment>
<name>RL1_AERHH</name>